<reference key="1">
    <citation type="journal article" date="1999" name="Nature">
        <title>Sequence and analysis of chromosome 4 of the plant Arabidopsis thaliana.</title>
        <authorList>
            <person name="Mayer K.F.X."/>
            <person name="Schueller C."/>
            <person name="Wambutt R."/>
            <person name="Murphy G."/>
            <person name="Volckaert G."/>
            <person name="Pohl T."/>
            <person name="Duesterhoeft A."/>
            <person name="Stiekema W."/>
            <person name="Entian K.-D."/>
            <person name="Terryn N."/>
            <person name="Harris B."/>
            <person name="Ansorge W."/>
            <person name="Brandt P."/>
            <person name="Grivell L.A."/>
            <person name="Rieger M."/>
            <person name="Weichselgartner M."/>
            <person name="de Simone V."/>
            <person name="Obermaier B."/>
            <person name="Mache R."/>
            <person name="Mueller M."/>
            <person name="Kreis M."/>
            <person name="Delseny M."/>
            <person name="Puigdomenech P."/>
            <person name="Watson M."/>
            <person name="Schmidtheini T."/>
            <person name="Reichert B."/>
            <person name="Portetelle D."/>
            <person name="Perez-Alonso M."/>
            <person name="Boutry M."/>
            <person name="Bancroft I."/>
            <person name="Vos P."/>
            <person name="Hoheisel J."/>
            <person name="Zimmermann W."/>
            <person name="Wedler H."/>
            <person name="Ridley P."/>
            <person name="Langham S.-A."/>
            <person name="McCullagh B."/>
            <person name="Bilham L."/>
            <person name="Robben J."/>
            <person name="van der Schueren J."/>
            <person name="Grymonprez B."/>
            <person name="Chuang Y.-J."/>
            <person name="Vandenbussche F."/>
            <person name="Braeken M."/>
            <person name="Weltjens I."/>
            <person name="Voet M."/>
            <person name="Bastiaens I."/>
            <person name="Aert R."/>
            <person name="Defoor E."/>
            <person name="Weitzenegger T."/>
            <person name="Bothe G."/>
            <person name="Ramsperger U."/>
            <person name="Hilbert H."/>
            <person name="Braun M."/>
            <person name="Holzer E."/>
            <person name="Brandt A."/>
            <person name="Peters S."/>
            <person name="van Staveren M."/>
            <person name="Dirkse W."/>
            <person name="Mooijman P."/>
            <person name="Klein Lankhorst R."/>
            <person name="Rose M."/>
            <person name="Hauf J."/>
            <person name="Koetter P."/>
            <person name="Berneiser S."/>
            <person name="Hempel S."/>
            <person name="Feldpausch M."/>
            <person name="Lamberth S."/>
            <person name="Van den Daele H."/>
            <person name="De Keyser A."/>
            <person name="Buysshaert C."/>
            <person name="Gielen J."/>
            <person name="Villarroel R."/>
            <person name="De Clercq R."/>
            <person name="van Montagu M."/>
            <person name="Rogers J."/>
            <person name="Cronin A."/>
            <person name="Quail M.A."/>
            <person name="Bray-Allen S."/>
            <person name="Clark L."/>
            <person name="Doggett J."/>
            <person name="Hall S."/>
            <person name="Kay M."/>
            <person name="Lennard N."/>
            <person name="McLay K."/>
            <person name="Mayes R."/>
            <person name="Pettett A."/>
            <person name="Rajandream M.A."/>
            <person name="Lyne M."/>
            <person name="Benes V."/>
            <person name="Rechmann S."/>
            <person name="Borkova D."/>
            <person name="Bloecker H."/>
            <person name="Scharfe M."/>
            <person name="Grimm M."/>
            <person name="Loehnert T.-H."/>
            <person name="Dose S."/>
            <person name="de Haan M."/>
            <person name="Maarse A.C."/>
            <person name="Schaefer M."/>
            <person name="Mueller-Auer S."/>
            <person name="Gabel C."/>
            <person name="Fuchs M."/>
            <person name="Fartmann B."/>
            <person name="Granderath K."/>
            <person name="Dauner D."/>
            <person name="Herzl A."/>
            <person name="Neumann S."/>
            <person name="Argiriou A."/>
            <person name="Vitale D."/>
            <person name="Liguori R."/>
            <person name="Piravandi E."/>
            <person name="Massenet O."/>
            <person name="Quigley F."/>
            <person name="Clabauld G."/>
            <person name="Muendlein A."/>
            <person name="Felber R."/>
            <person name="Schnabl S."/>
            <person name="Hiller R."/>
            <person name="Schmidt W."/>
            <person name="Lecharny A."/>
            <person name="Aubourg S."/>
            <person name="Chefdor F."/>
            <person name="Cooke R."/>
            <person name="Berger C."/>
            <person name="Monfort A."/>
            <person name="Casacuberta E."/>
            <person name="Gibbons T."/>
            <person name="Weber N."/>
            <person name="Vandenbol M."/>
            <person name="Bargues M."/>
            <person name="Terol J."/>
            <person name="Torres A."/>
            <person name="Perez-Perez A."/>
            <person name="Purnelle B."/>
            <person name="Bent E."/>
            <person name="Johnson S."/>
            <person name="Tacon D."/>
            <person name="Jesse T."/>
            <person name="Heijnen L."/>
            <person name="Schwarz S."/>
            <person name="Scholler P."/>
            <person name="Heber S."/>
            <person name="Francs P."/>
            <person name="Bielke C."/>
            <person name="Frishman D."/>
            <person name="Haase D."/>
            <person name="Lemcke K."/>
            <person name="Mewes H.-W."/>
            <person name="Stocker S."/>
            <person name="Zaccaria P."/>
            <person name="Bevan M."/>
            <person name="Wilson R.K."/>
            <person name="de la Bastide M."/>
            <person name="Habermann K."/>
            <person name="Parnell L."/>
            <person name="Dedhia N."/>
            <person name="Gnoj L."/>
            <person name="Schutz K."/>
            <person name="Huang E."/>
            <person name="Spiegel L."/>
            <person name="Sekhon M."/>
            <person name="Murray J."/>
            <person name="Sheet P."/>
            <person name="Cordes M."/>
            <person name="Abu-Threideh J."/>
            <person name="Stoneking T."/>
            <person name="Kalicki J."/>
            <person name="Graves T."/>
            <person name="Harmon G."/>
            <person name="Edwards J."/>
            <person name="Latreille P."/>
            <person name="Courtney L."/>
            <person name="Cloud J."/>
            <person name="Abbott A."/>
            <person name="Scott K."/>
            <person name="Johnson D."/>
            <person name="Minx P."/>
            <person name="Bentley D."/>
            <person name="Fulton B."/>
            <person name="Miller N."/>
            <person name="Greco T."/>
            <person name="Kemp K."/>
            <person name="Kramer J."/>
            <person name="Fulton L."/>
            <person name="Mardis E."/>
            <person name="Dante M."/>
            <person name="Pepin K."/>
            <person name="Hillier L.W."/>
            <person name="Nelson J."/>
            <person name="Spieth J."/>
            <person name="Ryan E."/>
            <person name="Andrews S."/>
            <person name="Geisel C."/>
            <person name="Layman D."/>
            <person name="Du H."/>
            <person name="Ali J."/>
            <person name="Berghoff A."/>
            <person name="Jones K."/>
            <person name="Drone K."/>
            <person name="Cotton M."/>
            <person name="Joshu C."/>
            <person name="Antonoiu B."/>
            <person name="Zidanic M."/>
            <person name="Strong C."/>
            <person name="Sun H."/>
            <person name="Lamar B."/>
            <person name="Yordan C."/>
            <person name="Ma P."/>
            <person name="Zhong J."/>
            <person name="Preston R."/>
            <person name="Vil D."/>
            <person name="Shekher M."/>
            <person name="Matero A."/>
            <person name="Shah R."/>
            <person name="Swaby I.K."/>
            <person name="O'Shaughnessy A."/>
            <person name="Rodriguez M."/>
            <person name="Hoffman J."/>
            <person name="Till S."/>
            <person name="Granat S."/>
            <person name="Shohdy N."/>
            <person name="Hasegawa A."/>
            <person name="Hameed A."/>
            <person name="Lodhi M."/>
            <person name="Johnson A."/>
            <person name="Chen E."/>
            <person name="Marra M.A."/>
            <person name="Martienssen R."/>
            <person name="McCombie W.R."/>
        </authorList>
    </citation>
    <scope>NUCLEOTIDE SEQUENCE [LARGE SCALE GENOMIC DNA]</scope>
    <source>
        <strain>cv. Columbia</strain>
    </source>
</reference>
<reference key="2">
    <citation type="journal article" date="2017" name="Plant J.">
        <title>Araport11: a complete reannotation of the Arabidopsis thaliana reference genome.</title>
        <authorList>
            <person name="Cheng C.Y."/>
            <person name="Krishnakumar V."/>
            <person name="Chan A.P."/>
            <person name="Thibaud-Nissen F."/>
            <person name="Schobel S."/>
            <person name="Town C.D."/>
        </authorList>
    </citation>
    <scope>GENOME REANNOTATION</scope>
    <source>
        <strain>cv. Columbia</strain>
    </source>
</reference>
<reference key="3">
    <citation type="journal article" date="2003" name="Plant Physiol.">
        <title>The Arabidopsis CDPK-SnRK superfamily of protein kinases.</title>
        <authorList>
            <person name="Hrabak E.M."/>
            <person name="Chan C.W.M."/>
            <person name="Gribskov M."/>
            <person name="Harper J.F."/>
            <person name="Choi J.H."/>
            <person name="Halford N."/>
            <person name="Kudla J."/>
            <person name="Luan S."/>
            <person name="Nimmo H.G."/>
            <person name="Sussman M.R."/>
            <person name="Thomas M."/>
            <person name="Walker-Simmons K."/>
            <person name="Zhu J.-K."/>
            <person name="Harmon A.C."/>
        </authorList>
    </citation>
    <scope>GENE FAMILY</scope>
    <scope>NOMENCLATURE</scope>
</reference>
<reference key="4">
    <citation type="journal article" date="2004" name="J. Biol. Chem.">
        <title>Identification of nine sucrose nonfermenting 1-related protein kinases 2 activated by hyperosmotic and saline stresses in Arabidopsis thaliana.</title>
        <authorList>
            <person name="Boudsocq M."/>
            <person name="Barbier-Brygoo H."/>
            <person name="Lauriere C."/>
        </authorList>
    </citation>
    <scope>TISSUE SPECIFICITY</scope>
    <scope>INDUCTION</scope>
</reference>
<reference key="5">
    <citation type="journal article" date="2006" name="J. Biol. Chem.">
        <title>The regulatory domain of SRK2E/OST1/SnRK2.6 interacts with ABI1 and integrates abscisic acid (ABA) and osmotic stress signals controlling stomatal closure in Arabidopsis.</title>
        <authorList>
            <person name="Yoshida R."/>
            <person name="Umezawa T."/>
            <person name="Mizoguchi T."/>
            <person name="Takahashi S."/>
            <person name="Takahashi F."/>
            <person name="Shinozaki K."/>
        </authorList>
    </citation>
    <scope>GENE FAMILY</scope>
    <scope>INDUCTION</scope>
</reference>
<keyword id="KW-0067">ATP-binding</keyword>
<keyword id="KW-0175">Coiled coil</keyword>
<keyword id="KW-0418">Kinase</keyword>
<keyword id="KW-0547">Nucleotide-binding</keyword>
<keyword id="KW-1185">Reference proteome</keyword>
<keyword id="KW-0723">Serine/threonine-protein kinase</keyword>
<keyword id="KW-0808">Transferase</keyword>
<feature type="chain" id="PRO_0000345161" description="Serine/threonine-protein kinase SRK2F">
    <location>
        <begin position="1"/>
        <end position="350"/>
    </location>
</feature>
<feature type="domain" description="Protein kinase" evidence="2">
    <location>
        <begin position="4"/>
        <end position="260"/>
    </location>
</feature>
<feature type="coiled-coil region" evidence="1">
    <location>
        <begin position="270"/>
        <end position="303"/>
    </location>
</feature>
<feature type="active site" description="Proton acceptor" evidence="2 3">
    <location>
        <position position="123"/>
    </location>
</feature>
<feature type="binding site" evidence="2">
    <location>
        <begin position="10"/>
        <end position="18"/>
    </location>
    <ligand>
        <name>ATP</name>
        <dbReference type="ChEBI" id="CHEBI:30616"/>
    </ligand>
</feature>
<feature type="binding site" evidence="2">
    <location>
        <position position="33"/>
    </location>
    <ligand>
        <name>ATP</name>
        <dbReference type="ChEBI" id="CHEBI:30616"/>
    </ligand>
</feature>
<proteinExistence type="evidence at protein level"/>
<organism>
    <name type="scientific">Arabidopsis thaliana</name>
    <name type="common">Mouse-ear cress</name>
    <dbReference type="NCBI Taxonomy" id="3702"/>
    <lineage>
        <taxon>Eukaryota</taxon>
        <taxon>Viridiplantae</taxon>
        <taxon>Streptophyta</taxon>
        <taxon>Embryophyta</taxon>
        <taxon>Tracheophyta</taxon>
        <taxon>Spermatophyta</taxon>
        <taxon>Magnoliopsida</taxon>
        <taxon>eudicotyledons</taxon>
        <taxon>Gunneridae</taxon>
        <taxon>Pentapetalae</taxon>
        <taxon>rosids</taxon>
        <taxon>malvids</taxon>
        <taxon>Brassicales</taxon>
        <taxon>Brassicaceae</taxon>
        <taxon>Camelineae</taxon>
        <taxon>Arabidopsis</taxon>
    </lineage>
</organism>
<dbReference type="EC" id="2.7.11.1"/>
<dbReference type="EMBL" id="AL035708">
    <property type="protein sequence ID" value="CAB38914.1"/>
    <property type="molecule type" value="Genomic_DNA"/>
</dbReference>
<dbReference type="EMBL" id="AL161596">
    <property type="protein sequence ID" value="CAB80664.1"/>
    <property type="molecule type" value="Genomic_DNA"/>
</dbReference>
<dbReference type="EMBL" id="CP002687">
    <property type="protein sequence ID" value="AEE87152.1"/>
    <property type="molecule type" value="Genomic_DNA"/>
</dbReference>
<dbReference type="PIR" id="T06107">
    <property type="entry name" value="T06107"/>
</dbReference>
<dbReference type="RefSeq" id="NP_195711.1">
    <property type="nucleotide sequence ID" value="NM_120165.2"/>
</dbReference>
<dbReference type="SMR" id="Q9SMQ4"/>
<dbReference type="BioGRID" id="15442">
    <property type="interactions" value="4"/>
</dbReference>
<dbReference type="FunCoup" id="Q9SMQ4">
    <property type="interactions" value="1281"/>
</dbReference>
<dbReference type="STRING" id="3702.Q9SMQ4"/>
<dbReference type="iPTMnet" id="Q9SMQ4"/>
<dbReference type="PaxDb" id="3702-AT4G40010.1"/>
<dbReference type="ProteomicsDB" id="226875"/>
<dbReference type="EnsemblPlants" id="AT4G40010.1">
    <property type="protein sequence ID" value="AT4G40010.1"/>
    <property type="gene ID" value="AT4G40010"/>
</dbReference>
<dbReference type="GeneID" id="830162"/>
<dbReference type="Gramene" id="AT4G40010.1">
    <property type="protein sequence ID" value="AT4G40010.1"/>
    <property type="gene ID" value="AT4G40010"/>
</dbReference>
<dbReference type="KEGG" id="ath:AT4G40010"/>
<dbReference type="Araport" id="AT4G40010"/>
<dbReference type="TAIR" id="AT4G40010">
    <property type="gene designation" value="SNRK2.7"/>
</dbReference>
<dbReference type="eggNOG" id="KOG0583">
    <property type="taxonomic scope" value="Eukaryota"/>
</dbReference>
<dbReference type="HOGENOM" id="CLU_000288_63_0_1"/>
<dbReference type="InParanoid" id="Q9SMQ4"/>
<dbReference type="OMA" id="AWHIVTG"/>
<dbReference type="PhylomeDB" id="Q9SMQ4"/>
<dbReference type="PRO" id="PR:Q9SMQ4"/>
<dbReference type="Proteomes" id="UP000006548">
    <property type="component" value="Chromosome 4"/>
</dbReference>
<dbReference type="ExpressionAtlas" id="Q9SMQ4">
    <property type="expression patterns" value="baseline and differential"/>
</dbReference>
<dbReference type="GO" id="GO:0005737">
    <property type="term" value="C:cytoplasm"/>
    <property type="evidence" value="ECO:0000314"/>
    <property type="project" value="TAIR"/>
</dbReference>
<dbReference type="GO" id="GO:0005634">
    <property type="term" value="C:nucleus"/>
    <property type="evidence" value="ECO:0000314"/>
    <property type="project" value="TAIR"/>
</dbReference>
<dbReference type="GO" id="GO:0005524">
    <property type="term" value="F:ATP binding"/>
    <property type="evidence" value="ECO:0007669"/>
    <property type="project" value="UniProtKB-KW"/>
</dbReference>
<dbReference type="GO" id="GO:0016301">
    <property type="term" value="F:kinase activity"/>
    <property type="evidence" value="ECO:0000314"/>
    <property type="project" value="TAIR"/>
</dbReference>
<dbReference type="GO" id="GO:0106310">
    <property type="term" value="F:protein serine kinase activity"/>
    <property type="evidence" value="ECO:0007669"/>
    <property type="project" value="RHEA"/>
</dbReference>
<dbReference type="GO" id="GO:0004674">
    <property type="term" value="F:protein serine/threonine kinase activity"/>
    <property type="evidence" value="ECO:0007669"/>
    <property type="project" value="UniProtKB-KW"/>
</dbReference>
<dbReference type="GO" id="GO:0006970">
    <property type="term" value="P:response to osmotic stress"/>
    <property type="evidence" value="ECO:0000314"/>
    <property type="project" value="TAIR"/>
</dbReference>
<dbReference type="GO" id="GO:0009651">
    <property type="term" value="P:response to salt stress"/>
    <property type="evidence" value="ECO:0000314"/>
    <property type="project" value="TAIR"/>
</dbReference>
<dbReference type="CDD" id="cd14662">
    <property type="entry name" value="STKc_SnRK2"/>
    <property type="match status" value="1"/>
</dbReference>
<dbReference type="FunFam" id="3.30.200.20:FF:000042">
    <property type="entry name" value="Aurora kinase A"/>
    <property type="match status" value="1"/>
</dbReference>
<dbReference type="FunFam" id="1.10.510.10:FF:000085">
    <property type="entry name" value="Serine/threonine-protein kinase SRK2E"/>
    <property type="match status" value="1"/>
</dbReference>
<dbReference type="Gene3D" id="3.30.200.20">
    <property type="entry name" value="Phosphorylase Kinase, domain 1"/>
    <property type="match status" value="1"/>
</dbReference>
<dbReference type="Gene3D" id="1.10.510.10">
    <property type="entry name" value="Transferase(Phosphotransferase) domain 1"/>
    <property type="match status" value="1"/>
</dbReference>
<dbReference type="InterPro" id="IPR011009">
    <property type="entry name" value="Kinase-like_dom_sf"/>
</dbReference>
<dbReference type="InterPro" id="IPR000719">
    <property type="entry name" value="Prot_kinase_dom"/>
</dbReference>
<dbReference type="InterPro" id="IPR017441">
    <property type="entry name" value="Protein_kinase_ATP_BS"/>
</dbReference>
<dbReference type="InterPro" id="IPR008271">
    <property type="entry name" value="Ser/Thr_kinase_AS"/>
</dbReference>
<dbReference type="PANTHER" id="PTHR24343">
    <property type="entry name" value="SERINE/THREONINE KINASE"/>
    <property type="match status" value="1"/>
</dbReference>
<dbReference type="PANTHER" id="PTHR24343:SF543">
    <property type="entry name" value="SERINE_THREONINE-PROTEIN KINASE SRK2F"/>
    <property type="match status" value="1"/>
</dbReference>
<dbReference type="Pfam" id="PF00069">
    <property type="entry name" value="Pkinase"/>
    <property type="match status" value="1"/>
</dbReference>
<dbReference type="SMART" id="SM00220">
    <property type="entry name" value="S_TKc"/>
    <property type="match status" value="1"/>
</dbReference>
<dbReference type="SUPFAM" id="SSF56112">
    <property type="entry name" value="Protein kinase-like (PK-like)"/>
    <property type="match status" value="1"/>
</dbReference>
<dbReference type="PROSITE" id="PS00107">
    <property type="entry name" value="PROTEIN_KINASE_ATP"/>
    <property type="match status" value="1"/>
</dbReference>
<dbReference type="PROSITE" id="PS50011">
    <property type="entry name" value="PROTEIN_KINASE_DOM"/>
    <property type="match status" value="1"/>
</dbReference>
<dbReference type="PROSITE" id="PS00108">
    <property type="entry name" value="PROTEIN_KINASE_ST"/>
    <property type="match status" value="1"/>
</dbReference>
<sequence length="350" mass="39775">MERYDILRDLGSGNFGVAKLVREKANGEFYAVKYIERGLKIDEHVQREIINHRDLKHPNIIRFKEVFVTPTHLAIVMEYAAGGELFERICNAGRFSEDEGRYYFKQLISGVSYCHAMQICHRDLKLENTLLDGSPSSHLKICDFGYSKSSVLHSQPKSTVGTPAYVAPEVLSRKEYNGKIADVWSCGVTLYVMLVGAYPFEDPEDPRNIRNTIQRILSVHYTIPDYVRISSECKHLLSRIFVADPDKRITVPEIEKHPWFLKGPLVVPPEEEKCDNGVEEEEEEEEKCRQSVEEIVKIIEEARKGVNGTDNNGGLGLIDGSIDLDDIDDADIYDDVDDDEERNGDFVCAL</sequence>
<protein>
    <recommendedName>
        <fullName>Serine/threonine-protein kinase SRK2F</fullName>
        <ecNumber>2.7.11.1</ecNumber>
    </recommendedName>
    <alternativeName>
        <fullName>OST1-kinase-like 5</fullName>
    </alternativeName>
    <alternativeName>
        <fullName>SNF1-related kinase 2.7</fullName>
        <shortName>SnRK2.7</shortName>
    </alternativeName>
</protein>
<gene>
    <name type="primary">SRK2F</name>
    <name type="synonym">OSKL5</name>
    <name type="synonym">SNRK2.7</name>
    <name type="ordered locus">At4g40010</name>
    <name type="ORF">T5J17.180</name>
</gene>
<name>SRK2F_ARATH</name>
<comment type="catalytic activity">
    <reaction>
        <text>L-seryl-[protein] + ATP = O-phospho-L-seryl-[protein] + ADP + H(+)</text>
        <dbReference type="Rhea" id="RHEA:17989"/>
        <dbReference type="Rhea" id="RHEA-COMP:9863"/>
        <dbReference type="Rhea" id="RHEA-COMP:11604"/>
        <dbReference type="ChEBI" id="CHEBI:15378"/>
        <dbReference type="ChEBI" id="CHEBI:29999"/>
        <dbReference type="ChEBI" id="CHEBI:30616"/>
        <dbReference type="ChEBI" id="CHEBI:83421"/>
        <dbReference type="ChEBI" id="CHEBI:456216"/>
        <dbReference type="EC" id="2.7.11.1"/>
    </reaction>
</comment>
<comment type="catalytic activity">
    <reaction>
        <text>L-threonyl-[protein] + ATP = O-phospho-L-threonyl-[protein] + ADP + H(+)</text>
        <dbReference type="Rhea" id="RHEA:46608"/>
        <dbReference type="Rhea" id="RHEA-COMP:11060"/>
        <dbReference type="Rhea" id="RHEA-COMP:11605"/>
        <dbReference type="ChEBI" id="CHEBI:15378"/>
        <dbReference type="ChEBI" id="CHEBI:30013"/>
        <dbReference type="ChEBI" id="CHEBI:30616"/>
        <dbReference type="ChEBI" id="CHEBI:61977"/>
        <dbReference type="ChEBI" id="CHEBI:456216"/>
        <dbReference type="EC" id="2.7.11.1"/>
    </reaction>
</comment>
<comment type="tissue specificity">
    <text evidence="4">Expressed in seedlings.</text>
</comment>
<comment type="induction">
    <text evidence="4 5">By abscisic acid (ABA), salt, and osmotic stress (at protein level).</text>
</comment>
<comment type="similarity">
    <text evidence="2">Belongs to the protein kinase superfamily. Ser/Thr protein kinase family.</text>
</comment>
<accession>Q9SMQ4</accession>
<evidence type="ECO:0000255" key="1"/>
<evidence type="ECO:0000255" key="2">
    <source>
        <dbReference type="PROSITE-ProRule" id="PRU00159"/>
    </source>
</evidence>
<evidence type="ECO:0000255" key="3">
    <source>
        <dbReference type="PROSITE-ProRule" id="PRU10027"/>
    </source>
</evidence>
<evidence type="ECO:0000269" key="4">
    <source>
    </source>
</evidence>
<evidence type="ECO:0000269" key="5">
    <source>
    </source>
</evidence>